<feature type="signal peptide" evidence="2">
    <location>
        <begin position="1"/>
        <end position="18"/>
    </location>
</feature>
<feature type="propeptide" id="PRO_0000003132">
    <location>
        <begin position="19"/>
        <end position="43"/>
    </location>
</feature>
<feature type="peptide" id="PRO_0000003133" description="Maximin-3">
    <location>
        <begin position="45"/>
        <end position="71"/>
    </location>
</feature>
<feature type="propeptide" id="PRO_0000003134" evidence="1">
    <location>
        <begin position="74"/>
        <end position="124"/>
    </location>
</feature>
<feature type="peptide" id="PRO_0000003135" description="Maximin-H9">
    <location>
        <begin position="125"/>
        <end position="144"/>
    </location>
</feature>
<feature type="modified residue" description="Isoleucine amide" evidence="4">
    <location>
        <position position="144"/>
    </location>
</feature>
<reference key="1">
    <citation type="journal article" date="2005" name="Eur. J. Immunol.">
        <title>Variety of antimicrobial peptides in the Bombina maxima toad and evidence of their rapid diversification.</title>
        <authorList>
            <person name="Lee W.-H."/>
            <person name="Li Y."/>
            <person name="Lai R."/>
            <person name="Li S."/>
            <person name="Zhang Y."/>
            <person name="Wang W."/>
        </authorList>
    </citation>
    <scope>NUCLEOTIDE SEQUENCE [MRNA]</scope>
    <scope>PROTEIN SEQUENCE OF 45-71 AND 125-144</scope>
    <scope>AMIDATION AT ILE-144</scope>
    <scope>MASS SPECTROMETRY</scope>
    <source>
        <tissue>Skin</tissue>
    </source>
</reference>
<reference key="2">
    <citation type="journal article" date="2002" name="Peptides">
        <title>Antimicrobial peptides from skin secretions of Chinese red belly toad Bombina maxima.</title>
        <authorList>
            <person name="Lai R."/>
            <person name="Zheng Y.-T."/>
            <person name="Shen J.-H."/>
            <person name="Liu G.-J."/>
            <person name="Liu H."/>
            <person name="Lee W.-H."/>
            <person name="Tang S.-Z."/>
            <person name="Zhang Y."/>
        </authorList>
    </citation>
    <scope>PROTEIN SEQUENCE OF 45-71</scope>
    <scope>MASS SPECTROMETRY</scope>
    <scope>FUNCTION OF MAXIMIN-3</scope>
</reference>
<protein>
    <recommendedName>
        <fullName>Maximins 3/H9 type 1</fullName>
    </recommendedName>
    <component>
        <recommendedName>
            <fullName>Maximin-3</fullName>
        </recommendedName>
    </component>
    <component>
        <recommendedName>
            <fullName>Maximin-H9</fullName>
        </recommendedName>
    </component>
</protein>
<evidence type="ECO:0000250" key="1"/>
<evidence type="ECO:0000255" key="2"/>
<evidence type="ECO:0000269" key="3">
    <source>
    </source>
</evidence>
<evidence type="ECO:0000269" key="4">
    <source>
    </source>
</evidence>
<evidence type="ECO:0000305" key="5"/>
<comment type="function">
    <text evidence="3">Maximin-3 shows antibacterial activity against both Gram-positive and Gram-negative bacteria. It also shows antimicrobial activity against the fungus C.albicans, but not against A.flavus nor P.uticale. It has little hemolytic activity. It possess a significant cytotoxicity against tumor cell lines. It possess a significant anti-HIV activity. It shows high spermicidal activity.</text>
</comment>
<comment type="function">
    <text evidence="1">Maximin-H9 shows antimicrobial activity against bacteria and against the fungus C.albicans. Shows strong hemolytic activity (By similarity).</text>
</comment>
<comment type="subcellular location">
    <subcellularLocation>
        <location>Secreted</location>
    </subcellularLocation>
</comment>
<comment type="tissue specificity">
    <text>Expressed by the skin glands.</text>
</comment>
<comment type="mass spectrometry">
    <molecule>Maximin-3</molecule>
</comment>
<comment type="similarity">
    <text evidence="5">Belongs to the bombinin family.</text>
</comment>
<organism>
    <name type="scientific">Bombina maxima</name>
    <name type="common">Giant fire-bellied toad</name>
    <name type="synonym">Chinese red belly toad</name>
    <dbReference type="NCBI Taxonomy" id="161274"/>
    <lineage>
        <taxon>Eukaryota</taxon>
        <taxon>Metazoa</taxon>
        <taxon>Chordata</taxon>
        <taxon>Craniata</taxon>
        <taxon>Vertebrata</taxon>
        <taxon>Euteleostomi</taxon>
        <taxon>Amphibia</taxon>
        <taxon>Batrachia</taxon>
        <taxon>Anura</taxon>
        <taxon>Bombinatoridae</taxon>
        <taxon>Bombina</taxon>
    </lineage>
</organism>
<keyword id="KW-0027">Amidation</keyword>
<keyword id="KW-0878">Amphibian defense peptide</keyword>
<keyword id="KW-0044">Antibiotic</keyword>
<keyword id="KW-0929">Antimicrobial</keyword>
<keyword id="KW-0165">Cleavage on pair of basic residues</keyword>
<keyword id="KW-0204">Cytolysis</keyword>
<keyword id="KW-0903">Direct protein sequencing</keyword>
<keyword id="KW-0295">Fungicide</keyword>
<keyword id="KW-0354">Hemolysis</keyword>
<keyword id="KW-0964">Secreted</keyword>
<keyword id="KW-0732">Signal</keyword>
<name>M3H91_BOMMX</name>
<sequence>MNFKYIVAVSFLIASAYARSVQNDEQSLSQRDVLEEEESLREIRGIGGKILSGLKTALKGAAKELASTYLHRKRTAEEHEVMKRLEAVMRDLDSLDYPEEASERETRGFNQDEIANLFTKKEKRILGPVLGLVSNALGGLIKKIG</sequence>
<dbReference type="EMBL" id="AY848991">
    <property type="protein sequence ID" value="AAX50212.1"/>
    <property type="molecule type" value="mRNA"/>
</dbReference>
<dbReference type="EMBL" id="AY848976">
    <property type="protein sequence ID" value="AAX50197.1"/>
    <property type="molecule type" value="mRNA"/>
</dbReference>
<dbReference type="SMR" id="Q58T69"/>
<dbReference type="GO" id="GO:0005576">
    <property type="term" value="C:extracellular region"/>
    <property type="evidence" value="ECO:0007669"/>
    <property type="project" value="UniProtKB-SubCell"/>
</dbReference>
<dbReference type="GO" id="GO:0042742">
    <property type="term" value="P:defense response to bacterium"/>
    <property type="evidence" value="ECO:0007669"/>
    <property type="project" value="UniProtKB-KW"/>
</dbReference>
<dbReference type="GO" id="GO:0050832">
    <property type="term" value="P:defense response to fungus"/>
    <property type="evidence" value="ECO:0007669"/>
    <property type="project" value="UniProtKB-KW"/>
</dbReference>
<dbReference type="GO" id="GO:0031640">
    <property type="term" value="P:killing of cells of another organism"/>
    <property type="evidence" value="ECO:0007669"/>
    <property type="project" value="UniProtKB-KW"/>
</dbReference>
<dbReference type="InterPro" id="IPR007962">
    <property type="entry name" value="Bombinin"/>
</dbReference>
<dbReference type="Pfam" id="PF05298">
    <property type="entry name" value="Bombinin"/>
    <property type="match status" value="1"/>
</dbReference>
<accession>Q58T69</accession>
<proteinExistence type="evidence at protein level"/>